<comment type="function">
    <text evidence="1">Allows the formation of correctly charged Gln-tRNA(Gln) through the transamidation of misacylated Glu-tRNA(Gln) in organisms which lack glutaminyl-tRNA synthetase. The reaction takes place in the presence of glutamine and ATP through an activated gamma-phospho-Glu-tRNA(Gln).</text>
</comment>
<comment type="catalytic activity">
    <reaction evidence="1">
        <text>L-glutamyl-tRNA(Gln) + L-glutamine + ATP + H2O = L-glutaminyl-tRNA(Gln) + L-glutamate + ADP + phosphate + H(+)</text>
        <dbReference type="Rhea" id="RHEA:17521"/>
        <dbReference type="Rhea" id="RHEA-COMP:9681"/>
        <dbReference type="Rhea" id="RHEA-COMP:9684"/>
        <dbReference type="ChEBI" id="CHEBI:15377"/>
        <dbReference type="ChEBI" id="CHEBI:15378"/>
        <dbReference type="ChEBI" id="CHEBI:29985"/>
        <dbReference type="ChEBI" id="CHEBI:30616"/>
        <dbReference type="ChEBI" id="CHEBI:43474"/>
        <dbReference type="ChEBI" id="CHEBI:58359"/>
        <dbReference type="ChEBI" id="CHEBI:78520"/>
        <dbReference type="ChEBI" id="CHEBI:78521"/>
        <dbReference type="ChEBI" id="CHEBI:456216"/>
        <dbReference type="EC" id="6.3.5.7"/>
    </reaction>
</comment>
<comment type="subunit">
    <text evidence="1">Heterotrimer of A, B and C subunits.</text>
</comment>
<comment type="similarity">
    <text evidence="1">Belongs to the amidase family. GatA subfamily.</text>
</comment>
<accession>Q7UT33</accession>
<dbReference type="EC" id="6.3.5.7" evidence="1"/>
<dbReference type="EMBL" id="BX294140">
    <property type="protein sequence ID" value="CAD73608.1"/>
    <property type="molecule type" value="Genomic_DNA"/>
</dbReference>
<dbReference type="RefSeq" id="NP_865922.1">
    <property type="nucleotide sequence ID" value="NC_005027.1"/>
</dbReference>
<dbReference type="RefSeq" id="WP_011119740.1">
    <property type="nucleotide sequence ID" value="NC_005027.1"/>
</dbReference>
<dbReference type="SMR" id="Q7UT33"/>
<dbReference type="STRING" id="243090.RB4143"/>
<dbReference type="EnsemblBacteria" id="CAD73608">
    <property type="protein sequence ID" value="CAD73608"/>
    <property type="gene ID" value="RB4143"/>
</dbReference>
<dbReference type="KEGG" id="rba:RB4143"/>
<dbReference type="PATRIC" id="fig|243090.15.peg.1925"/>
<dbReference type="eggNOG" id="COG0154">
    <property type="taxonomic scope" value="Bacteria"/>
</dbReference>
<dbReference type="HOGENOM" id="CLU_009600_0_3_0"/>
<dbReference type="InParanoid" id="Q7UT33"/>
<dbReference type="OrthoDB" id="9811471at2"/>
<dbReference type="Proteomes" id="UP000001025">
    <property type="component" value="Chromosome"/>
</dbReference>
<dbReference type="GO" id="GO:0030956">
    <property type="term" value="C:glutamyl-tRNA(Gln) amidotransferase complex"/>
    <property type="evidence" value="ECO:0007669"/>
    <property type="project" value="InterPro"/>
</dbReference>
<dbReference type="GO" id="GO:0005524">
    <property type="term" value="F:ATP binding"/>
    <property type="evidence" value="ECO:0007669"/>
    <property type="project" value="UniProtKB-KW"/>
</dbReference>
<dbReference type="GO" id="GO:0050567">
    <property type="term" value="F:glutaminyl-tRNA synthase (glutamine-hydrolyzing) activity"/>
    <property type="evidence" value="ECO:0007669"/>
    <property type="project" value="UniProtKB-UniRule"/>
</dbReference>
<dbReference type="GO" id="GO:0006412">
    <property type="term" value="P:translation"/>
    <property type="evidence" value="ECO:0007669"/>
    <property type="project" value="UniProtKB-UniRule"/>
</dbReference>
<dbReference type="Gene3D" id="3.90.1300.10">
    <property type="entry name" value="Amidase signature (AS) domain"/>
    <property type="match status" value="1"/>
</dbReference>
<dbReference type="HAMAP" id="MF_00120">
    <property type="entry name" value="GatA"/>
    <property type="match status" value="1"/>
</dbReference>
<dbReference type="InterPro" id="IPR000120">
    <property type="entry name" value="Amidase"/>
</dbReference>
<dbReference type="InterPro" id="IPR020556">
    <property type="entry name" value="Amidase_CS"/>
</dbReference>
<dbReference type="InterPro" id="IPR023631">
    <property type="entry name" value="Amidase_dom"/>
</dbReference>
<dbReference type="InterPro" id="IPR036928">
    <property type="entry name" value="AS_sf"/>
</dbReference>
<dbReference type="InterPro" id="IPR004412">
    <property type="entry name" value="GatA"/>
</dbReference>
<dbReference type="NCBIfam" id="TIGR00132">
    <property type="entry name" value="gatA"/>
    <property type="match status" value="1"/>
</dbReference>
<dbReference type="PANTHER" id="PTHR11895:SF151">
    <property type="entry name" value="GLUTAMYL-TRNA(GLN) AMIDOTRANSFERASE SUBUNIT A"/>
    <property type="match status" value="1"/>
</dbReference>
<dbReference type="PANTHER" id="PTHR11895">
    <property type="entry name" value="TRANSAMIDASE"/>
    <property type="match status" value="1"/>
</dbReference>
<dbReference type="Pfam" id="PF01425">
    <property type="entry name" value="Amidase"/>
    <property type="match status" value="1"/>
</dbReference>
<dbReference type="PIRSF" id="PIRSF001221">
    <property type="entry name" value="Amidase_fungi"/>
    <property type="match status" value="1"/>
</dbReference>
<dbReference type="SUPFAM" id="SSF75304">
    <property type="entry name" value="Amidase signature (AS) enzymes"/>
    <property type="match status" value="1"/>
</dbReference>
<dbReference type="PROSITE" id="PS00571">
    <property type="entry name" value="AMIDASES"/>
    <property type="match status" value="1"/>
</dbReference>
<gene>
    <name evidence="1" type="primary">gatA</name>
    <name type="ordered locus">RB4143</name>
</gene>
<evidence type="ECO:0000255" key="1">
    <source>
        <dbReference type="HAMAP-Rule" id="MF_00120"/>
    </source>
</evidence>
<sequence>MLHSASEILKQLDSGEVTAVEVIAQSLAAIRASQPTINAFTHVAEETAMQAAEAVDADRKAGKTLGPLAGLPVAIKDVLCTSDMPTTCSSKMLEGFVPPYDATVVARLKSAGAIVVGKTNMDEFAMGASTETSAMGVTGNPWDTTKTPGGSSGGAAAAVAAGAVPLSLGTDTGGSIRQPAAFCGITGLKPTYGRVSRYGLVAFASSLDQAGPMGWSVDDVAIGLQAMAGYDPRDSTSVNAEVPDFTPAMAAEDVRGMRIGVLREGLDQDGISPAVRDALATAESVFREQGAEIVEVELPHSKYWVPTYYVIAPCEASSNLSRFDGAHYGYRVADAEIAAADSGPLEAMYSLSRAGGFGSEVKRRIMVGTYALSEGYYDAYYNQALKVRRLIRNDYDAAFQQVDLMLGPVTPSPAFALNEKTDDPIAMYLCDLFTVGANLAGVPAISLPGGFDAVGLPVGVQLQAPVMEETRLLRAGNVFQMASDFHTRRPPTFTANHSQ</sequence>
<name>GATA_RHOBA</name>
<organism>
    <name type="scientific">Rhodopirellula baltica (strain DSM 10527 / NCIMB 13988 / SH1)</name>
    <dbReference type="NCBI Taxonomy" id="243090"/>
    <lineage>
        <taxon>Bacteria</taxon>
        <taxon>Pseudomonadati</taxon>
        <taxon>Planctomycetota</taxon>
        <taxon>Planctomycetia</taxon>
        <taxon>Pirellulales</taxon>
        <taxon>Pirellulaceae</taxon>
        <taxon>Rhodopirellula</taxon>
    </lineage>
</organism>
<protein>
    <recommendedName>
        <fullName evidence="1">Glutamyl-tRNA(Gln) amidotransferase subunit A</fullName>
        <shortName evidence="1">Glu-ADT subunit A</shortName>
        <ecNumber evidence="1">6.3.5.7</ecNumber>
    </recommendedName>
</protein>
<feature type="chain" id="PRO_0000105195" description="Glutamyl-tRNA(Gln) amidotransferase subunit A">
    <location>
        <begin position="1"/>
        <end position="499"/>
    </location>
</feature>
<feature type="active site" description="Charge relay system" evidence="1">
    <location>
        <position position="76"/>
    </location>
</feature>
<feature type="active site" description="Charge relay system" evidence="1">
    <location>
        <position position="151"/>
    </location>
</feature>
<feature type="active site" description="Acyl-ester intermediate" evidence="1">
    <location>
        <position position="175"/>
    </location>
</feature>
<proteinExistence type="inferred from homology"/>
<keyword id="KW-0067">ATP-binding</keyword>
<keyword id="KW-0436">Ligase</keyword>
<keyword id="KW-0547">Nucleotide-binding</keyword>
<keyword id="KW-0648">Protein biosynthesis</keyword>
<keyword id="KW-1185">Reference proteome</keyword>
<reference key="1">
    <citation type="journal article" date="2003" name="Proc. Natl. Acad. Sci. U.S.A.">
        <title>Complete genome sequence of the marine planctomycete Pirellula sp. strain 1.</title>
        <authorList>
            <person name="Gloeckner F.O."/>
            <person name="Kube M."/>
            <person name="Bauer M."/>
            <person name="Teeling H."/>
            <person name="Lombardot T."/>
            <person name="Ludwig W."/>
            <person name="Gade D."/>
            <person name="Beck A."/>
            <person name="Borzym K."/>
            <person name="Heitmann K."/>
            <person name="Rabus R."/>
            <person name="Schlesner H."/>
            <person name="Amann R."/>
            <person name="Reinhardt R."/>
        </authorList>
    </citation>
    <scope>NUCLEOTIDE SEQUENCE [LARGE SCALE GENOMIC DNA]</scope>
    <source>
        <strain>DSM 10527 / NCIMB 13988 / SH1</strain>
    </source>
</reference>